<feature type="chain" id="PRO_0000217127" description="Cytochrome b6-f complex subunit 8">
    <location>
        <begin position="1"/>
        <end position="29"/>
    </location>
</feature>
<feature type="transmembrane region" description="Helical" evidence="1">
    <location>
        <begin position="3"/>
        <end position="23"/>
    </location>
</feature>
<accession>Q8WI23</accession>
<evidence type="ECO:0000255" key="1">
    <source>
        <dbReference type="HAMAP-Rule" id="MF_00395"/>
    </source>
</evidence>
<geneLocation type="chloroplast"/>
<organism>
    <name type="scientific">Psilotum nudum</name>
    <name type="common">Whisk fern</name>
    <name type="synonym">Lycopodium nudum</name>
    <dbReference type="NCBI Taxonomy" id="3240"/>
    <lineage>
        <taxon>Eukaryota</taxon>
        <taxon>Viridiplantae</taxon>
        <taxon>Streptophyta</taxon>
        <taxon>Embryophyta</taxon>
        <taxon>Tracheophyta</taxon>
        <taxon>Polypodiopsida</taxon>
        <taxon>Ophioglossidae</taxon>
        <taxon>Psilotales</taxon>
        <taxon>Psilotaceae</taxon>
        <taxon>Psilotum</taxon>
    </lineage>
</organism>
<gene>
    <name evidence="1" type="primary">petN</name>
</gene>
<keyword id="KW-0150">Chloroplast</keyword>
<keyword id="KW-0249">Electron transport</keyword>
<keyword id="KW-0472">Membrane</keyword>
<keyword id="KW-0602">Photosynthesis</keyword>
<keyword id="KW-0934">Plastid</keyword>
<keyword id="KW-0793">Thylakoid</keyword>
<keyword id="KW-0812">Transmembrane</keyword>
<keyword id="KW-1133">Transmembrane helix</keyword>
<keyword id="KW-0813">Transport</keyword>
<sequence length="29" mass="3199">MDTVSIAWAALMVIFTFSISLVVWGRNGL</sequence>
<protein>
    <recommendedName>
        <fullName evidence="1">Cytochrome b6-f complex subunit 8</fullName>
    </recommendedName>
    <alternativeName>
        <fullName evidence="1">Cytochrome b6-f complex subunit PetN</fullName>
    </alternativeName>
    <alternativeName>
        <fullName evidence="1">Cytochrome b6-f complex subunit VIII</fullName>
    </alternativeName>
</protein>
<comment type="function">
    <text evidence="1">Component of the cytochrome b6-f complex, which mediates electron transfer between photosystem II (PSII) and photosystem I (PSI), cyclic electron flow around PSI, and state transitions.</text>
</comment>
<comment type="subunit">
    <text evidence="1">The 4 large subunits of the cytochrome b6-f complex are cytochrome b6, subunit IV (17 kDa polypeptide, PetD), cytochrome f and the Rieske protein, while the 4 small subunits are PetG, PetL, PetM and PetN. The complex functions as a dimer.</text>
</comment>
<comment type="subcellular location">
    <subcellularLocation>
        <location evidence="1">Plastid</location>
        <location evidence="1">Chloroplast thylakoid membrane</location>
        <topology evidence="1">Single-pass membrane protein</topology>
    </subcellularLocation>
</comment>
<comment type="similarity">
    <text evidence="1">Belongs to the PetN family.</text>
</comment>
<name>PETN_PSINU</name>
<reference key="1">
    <citation type="journal article" date="2004" name="Mol. Biol. Evol.">
        <title>Chloroplast phylogeny indicates that bryophytes are monophyletic.</title>
        <authorList>
            <person name="Nishiyama T."/>
            <person name="Wolf P.G."/>
            <person name="Kugita M."/>
            <person name="Sinclair R.B."/>
            <person name="Sugita M."/>
            <person name="Sugiura C."/>
            <person name="Wakasugi T."/>
            <person name="Yamada K."/>
            <person name="Yoshinaga K."/>
            <person name="Yamaguchi K."/>
            <person name="Ueda K."/>
            <person name="Hasebe M."/>
        </authorList>
    </citation>
    <scope>NUCLEOTIDE SEQUENCE [LARGE SCALE GENOMIC DNA]</scope>
    <source>
        <strain>Kingyoku</strain>
    </source>
</reference>
<proteinExistence type="inferred from homology"/>
<dbReference type="EMBL" id="AP004638">
    <property type="protein sequence ID" value="BAB84209.1"/>
    <property type="molecule type" value="Genomic_DNA"/>
</dbReference>
<dbReference type="RefSeq" id="NP_569622.1">
    <property type="nucleotide sequence ID" value="NC_003386.1"/>
</dbReference>
<dbReference type="SMR" id="Q8WI23"/>
<dbReference type="GeneID" id="2545132"/>
<dbReference type="GO" id="GO:0009535">
    <property type="term" value="C:chloroplast thylakoid membrane"/>
    <property type="evidence" value="ECO:0007669"/>
    <property type="project" value="UniProtKB-SubCell"/>
</dbReference>
<dbReference type="GO" id="GO:0009512">
    <property type="term" value="C:cytochrome b6f complex"/>
    <property type="evidence" value="ECO:0007669"/>
    <property type="project" value="InterPro"/>
</dbReference>
<dbReference type="GO" id="GO:0045158">
    <property type="term" value="F:electron transporter, transferring electrons within cytochrome b6/f complex of photosystem II activity"/>
    <property type="evidence" value="ECO:0007669"/>
    <property type="project" value="InterPro"/>
</dbReference>
<dbReference type="GO" id="GO:0017004">
    <property type="term" value="P:cytochrome complex assembly"/>
    <property type="evidence" value="ECO:0007669"/>
    <property type="project" value="UniProtKB-UniRule"/>
</dbReference>
<dbReference type="GO" id="GO:0015979">
    <property type="term" value="P:photosynthesis"/>
    <property type="evidence" value="ECO:0007669"/>
    <property type="project" value="UniProtKB-KW"/>
</dbReference>
<dbReference type="HAMAP" id="MF_00395">
    <property type="entry name" value="Cytb6_f_PetN"/>
    <property type="match status" value="1"/>
</dbReference>
<dbReference type="InterPro" id="IPR036143">
    <property type="entry name" value="Cytochr_b6-f_cplx_su8_sf"/>
</dbReference>
<dbReference type="InterPro" id="IPR005497">
    <property type="entry name" value="Cytochrome_b6-f_cplx_su8"/>
</dbReference>
<dbReference type="Pfam" id="PF03742">
    <property type="entry name" value="PetN"/>
    <property type="match status" value="1"/>
</dbReference>
<dbReference type="SUPFAM" id="SSF103451">
    <property type="entry name" value="PetN subunit of the cytochrome b6f complex"/>
    <property type="match status" value="1"/>
</dbReference>